<feature type="chain" id="PRO_0000103532" description="Dihydroxy-acid dehydratase">
    <location>
        <begin position="1"/>
        <end position="612"/>
    </location>
</feature>
<feature type="active site" description="Proton acceptor" evidence="1">
    <location>
        <position position="515"/>
    </location>
</feature>
<feature type="binding site" evidence="1">
    <location>
        <position position="81"/>
    </location>
    <ligand>
        <name>Mg(2+)</name>
        <dbReference type="ChEBI" id="CHEBI:18420"/>
    </ligand>
</feature>
<feature type="binding site" evidence="1">
    <location>
        <position position="122"/>
    </location>
    <ligand>
        <name>[2Fe-2S] cluster</name>
        <dbReference type="ChEBI" id="CHEBI:190135"/>
    </ligand>
</feature>
<feature type="binding site" evidence="1">
    <location>
        <position position="123"/>
    </location>
    <ligand>
        <name>Mg(2+)</name>
        <dbReference type="ChEBI" id="CHEBI:18420"/>
    </ligand>
</feature>
<feature type="binding site" description="via carbamate group" evidence="1">
    <location>
        <position position="124"/>
    </location>
    <ligand>
        <name>Mg(2+)</name>
        <dbReference type="ChEBI" id="CHEBI:18420"/>
    </ligand>
</feature>
<feature type="binding site" evidence="1">
    <location>
        <position position="193"/>
    </location>
    <ligand>
        <name>[2Fe-2S] cluster</name>
        <dbReference type="ChEBI" id="CHEBI:190135"/>
    </ligand>
</feature>
<feature type="binding site" evidence="1">
    <location>
        <position position="489"/>
    </location>
    <ligand>
        <name>Mg(2+)</name>
        <dbReference type="ChEBI" id="CHEBI:18420"/>
    </ligand>
</feature>
<feature type="modified residue" description="N6-carboxylysine" evidence="1">
    <location>
        <position position="124"/>
    </location>
</feature>
<protein>
    <recommendedName>
        <fullName evidence="1">Dihydroxy-acid dehydratase</fullName>
        <shortName evidence="1">DAD</shortName>
        <ecNumber evidence="1">4.2.1.9</ecNumber>
    </recommendedName>
</protein>
<sequence>MPEYRSKTSTHGRNMAGARALWRATGMKDGDFHKPIIAIANSFTQFVPGHVHLKDLGQLVAREIERVGGVAKEFDTIAVDDGIAMGHDGMLYSLPSREIIADSVEYMVNAHCADALVCISNCDKITPGMLMAALRLNIPTVFVSGGPMEAGKTKLADHNLDLIDAMVIAADDSASDEKVAEFERSACPTCGSCSGMFTANSMNCLTEALGLSLPGNGTVVATHADREQLFLRAGRVAVELCHRWYGGEDPTALPRGIATFEAFENAMTLDIAMGGSTNTILHLLAAAQEGEVPFGMRDIDRLSKRVPQLCKVAPNTPKYHIEDVHRAGGIMSILGELARGGLLHTNAATVHTRTLADAIAQWDVTQVDDDKVHTFYKAGPAGIPTQIAFSQATRWDTLDTDRSEGCIRDVAHAFSQEGGLAVLYGNIARDGCVVKTAGVDESIHVFEGNTRVYESQDSAVKGILADEVKAGDVVVIRYEGPKGGPGMQEMLYPTSYLKSKGLGKHCALLTDGRFSGGTSGLSIGHASPEAAAGGAIGLVRNGDKILIDIPKRSIDLLVSDEELAARRTEQDAKGWKPVEVRPRKVTTALKAYALLATSADKGAVRDKAMLDG</sequence>
<keyword id="KW-0001">2Fe-2S</keyword>
<keyword id="KW-0028">Amino-acid biosynthesis</keyword>
<keyword id="KW-0100">Branched-chain amino acid biosynthesis</keyword>
<keyword id="KW-0408">Iron</keyword>
<keyword id="KW-0411">Iron-sulfur</keyword>
<keyword id="KW-0456">Lyase</keyword>
<keyword id="KW-0460">Magnesium</keyword>
<keyword id="KW-0479">Metal-binding</keyword>
<keyword id="KW-1185">Reference proteome</keyword>
<dbReference type="EC" id="4.2.1.9" evidence="1"/>
<dbReference type="EMBL" id="AE008922">
    <property type="protein sequence ID" value="AAM39664.1"/>
    <property type="molecule type" value="Genomic_DNA"/>
</dbReference>
<dbReference type="RefSeq" id="NP_635740.1">
    <property type="nucleotide sequence ID" value="NC_003902.1"/>
</dbReference>
<dbReference type="RefSeq" id="WP_011035599.1">
    <property type="nucleotide sequence ID" value="NC_003902.1"/>
</dbReference>
<dbReference type="SMR" id="Q8PDJ3"/>
<dbReference type="STRING" id="190485.XCC0345"/>
<dbReference type="EnsemblBacteria" id="AAM39664">
    <property type="protein sequence ID" value="AAM39664"/>
    <property type="gene ID" value="XCC0345"/>
</dbReference>
<dbReference type="KEGG" id="xcc:XCC0345"/>
<dbReference type="PATRIC" id="fig|190485.4.peg.376"/>
<dbReference type="eggNOG" id="COG0129">
    <property type="taxonomic scope" value="Bacteria"/>
</dbReference>
<dbReference type="HOGENOM" id="CLU_014271_4_2_6"/>
<dbReference type="OrthoDB" id="9807077at2"/>
<dbReference type="UniPathway" id="UPA00047">
    <property type="reaction ID" value="UER00057"/>
</dbReference>
<dbReference type="UniPathway" id="UPA00049">
    <property type="reaction ID" value="UER00061"/>
</dbReference>
<dbReference type="Proteomes" id="UP000001010">
    <property type="component" value="Chromosome"/>
</dbReference>
<dbReference type="GO" id="GO:0005829">
    <property type="term" value="C:cytosol"/>
    <property type="evidence" value="ECO:0000318"/>
    <property type="project" value="GO_Central"/>
</dbReference>
<dbReference type="GO" id="GO:0051537">
    <property type="term" value="F:2 iron, 2 sulfur cluster binding"/>
    <property type="evidence" value="ECO:0007669"/>
    <property type="project" value="UniProtKB-UniRule"/>
</dbReference>
<dbReference type="GO" id="GO:0004160">
    <property type="term" value="F:dihydroxy-acid dehydratase activity"/>
    <property type="evidence" value="ECO:0007669"/>
    <property type="project" value="UniProtKB-UniRule"/>
</dbReference>
<dbReference type="GO" id="GO:0016836">
    <property type="term" value="F:hydro-lyase activity"/>
    <property type="evidence" value="ECO:0000318"/>
    <property type="project" value="GO_Central"/>
</dbReference>
<dbReference type="GO" id="GO:0000287">
    <property type="term" value="F:magnesium ion binding"/>
    <property type="evidence" value="ECO:0007669"/>
    <property type="project" value="UniProtKB-UniRule"/>
</dbReference>
<dbReference type="GO" id="GO:0009097">
    <property type="term" value="P:isoleucine biosynthetic process"/>
    <property type="evidence" value="ECO:0007669"/>
    <property type="project" value="UniProtKB-UniRule"/>
</dbReference>
<dbReference type="GO" id="GO:0009099">
    <property type="term" value="P:L-valine biosynthetic process"/>
    <property type="evidence" value="ECO:0007669"/>
    <property type="project" value="UniProtKB-UniRule"/>
</dbReference>
<dbReference type="FunFam" id="3.50.30.80:FF:000001">
    <property type="entry name" value="Dihydroxy-acid dehydratase"/>
    <property type="match status" value="1"/>
</dbReference>
<dbReference type="Gene3D" id="3.50.30.80">
    <property type="entry name" value="IlvD/EDD C-terminal domain-like"/>
    <property type="match status" value="1"/>
</dbReference>
<dbReference type="HAMAP" id="MF_00012">
    <property type="entry name" value="IlvD"/>
    <property type="match status" value="1"/>
</dbReference>
<dbReference type="InterPro" id="IPR042096">
    <property type="entry name" value="Dihydro-acid_dehy_C"/>
</dbReference>
<dbReference type="InterPro" id="IPR004404">
    <property type="entry name" value="DihydroxyA_deHydtase"/>
</dbReference>
<dbReference type="InterPro" id="IPR020558">
    <property type="entry name" value="DiOHA_6PGluconate_deHydtase_CS"/>
</dbReference>
<dbReference type="InterPro" id="IPR056740">
    <property type="entry name" value="ILV_EDD_C"/>
</dbReference>
<dbReference type="InterPro" id="IPR000581">
    <property type="entry name" value="ILV_EDD_N"/>
</dbReference>
<dbReference type="InterPro" id="IPR037237">
    <property type="entry name" value="IlvD/EDD_N"/>
</dbReference>
<dbReference type="NCBIfam" id="TIGR00110">
    <property type="entry name" value="ilvD"/>
    <property type="match status" value="1"/>
</dbReference>
<dbReference type="NCBIfam" id="NF009103">
    <property type="entry name" value="PRK12448.1"/>
    <property type="match status" value="1"/>
</dbReference>
<dbReference type="PANTHER" id="PTHR43661">
    <property type="entry name" value="D-XYLONATE DEHYDRATASE"/>
    <property type="match status" value="1"/>
</dbReference>
<dbReference type="PANTHER" id="PTHR43661:SF3">
    <property type="entry name" value="D-XYLONATE DEHYDRATASE YAGF-RELATED"/>
    <property type="match status" value="1"/>
</dbReference>
<dbReference type="Pfam" id="PF24877">
    <property type="entry name" value="ILV_EDD_C"/>
    <property type="match status" value="1"/>
</dbReference>
<dbReference type="Pfam" id="PF00920">
    <property type="entry name" value="ILVD_EDD_N"/>
    <property type="match status" value="1"/>
</dbReference>
<dbReference type="SUPFAM" id="SSF143975">
    <property type="entry name" value="IlvD/EDD N-terminal domain-like"/>
    <property type="match status" value="1"/>
</dbReference>
<dbReference type="SUPFAM" id="SSF52016">
    <property type="entry name" value="LeuD/IlvD-like"/>
    <property type="match status" value="1"/>
</dbReference>
<dbReference type="PROSITE" id="PS00886">
    <property type="entry name" value="ILVD_EDD_1"/>
    <property type="match status" value="1"/>
</dbReference>
<dbReference type="PROSITE" id="PS00887">
    <property type="entry name" value="ILVD_EDD_2"/>
    <property type="match status" value="1"/>
</dbReference>
<accession>Q8PDJ3</accession>
<proteinExistence type="inferred from homology"/>
<gene>
    <name evidence="1" type="primary">ilvD</name>
    <name type="ordered locus">XCC0345</name>
</gene>
<name>ILVD_XANCP</name>
<comment type="function">
    <text evidence="1">Functions in the biosynthesis of branched-chain amino acids. Catalyzes the dehydration of (2R,3R)-2,3-dihydroxy-3-methylpentanoate (2,3-dihydroxy-3-methylvalerate) into 2-oxo-3-methylpentanoate (2-oxo-3-methylvalerate) and of (2R)-2,3-dihydroxy-3-methylbutanoate (2,3-dihydroxyisovalerate) into 2-oxo-3-methylbutanoate (2-oxoisovalerate), the penultimate precursor to L-isoleucine and L-valine, respectively.</text>
</comment>
<comment type="catalytic activity">
    <reaction evidence="1">
        <text>(2R)-2,3-dihydroxy-3-methylbutanoate = 3-methyl-2-oxobutanoate + H2O</text>
        <dbReference type="Rhea" id="RHEA:24809"/>
        <dbReference type="ChEBI" id="CHEBI:11851"/>
        <dbReference type="ChEBI" id="CHEBI:15377"/>
        <dbReference type="ChEBI" id="CHEBI:49072"/>
        <dbReference type="EC" id="4.2.1.9"/>
    </reaction>
    <physiologicalReaction direction="left-to-right" evidence="1">
        <dbReference type="Rhea" id="RHEA:24810"/>
    </physiologicalReaction>
</comment>
<comment type="catalytic activity">
    <reaction evidence="1">
        <text>(2R,3R)-2,3-dihydroxy-3-methylpentanoate = (S)-3-methyl-2-oxopentanoate + H2O</text>
        <dbReference type="Rhea" id="RHEA:27694"/>
        <dbReference type="ChEBI" id="CHEBI:15377"/>
        <dbReference type="ChEBI" id="CHEBI:35146"/>
        <dbReference type="ChEBI" id="CHEBI:49258"/>
        <dbReference type="EC" id="4.2.1.9"/>
    </reaction>
    <physiologicalReaction direction="left-to-right" evidence="1">
        <dbReference type="Rhea" id="RHEA:27695"/>
    </physiologicalReaction>
</comment>
<comment type="cofactor">
    <cofactor evidence="1">
        <name>[2Fe-2S] cluster</name>
        <dbReference type="ChEBI" id="CHEBI:190135"/>
    </cofactor>
    <text evidence="1">Binds 1 [2Fe-2S] cluster per subunit. This cluster acts as a Lewis acid cofactor.</text>
</comment>
<comment type="cofactor">
    <cofactor evidence="1">
        <name>Mg(2+)</name>
        <dbReference type="ChEBI" id="CHEBI:18420"/>
    </cofactor>
</comment>
<comment type="pathway">
    <text evidence="1">Amino-acid biosynthesis; L-isoleucine biosynthesis; L-isoleucine from 2-oxobutanoate: step 3/4.</text>
</comment>
<comment type="pathway">
    <text evidence="1">Amino-acid biosynthesis; L-valine biosynthesis; L-valine from pyruvate: step 3/4.</text>
</comment>
<comment type="subunit">
    <text evidence="1">Homodimer.</text>
</comment>
<comment type="similarity">
    <text evidence="1">Belongs to the IlvD/Edd family.</text>
</comment>
<reference key="1">
    <citation type="journal article" date="2002" name="Nature">
        <title>Comparison of the genomes of two Xanthomonas pathogens with differing host specificities.</title>
        <authorList>
            <person name="da Silva A.C.R."/>
            <person name="Ferro J.A."/>
            <person name="Reinach F.C."/>
            <person name="Farah C.S."/>
            <person name="Furlan L.R."/>
            <person name="Quaggio R.B."/>
            <person name="Monteiro-Vitorello C.B."/>
            <person name="Van Sluys M.A."/>
            <person name="Almeida N.F. Jr."/>
            <person name="Alves L.M.C."/>
            <person name="do Amaral A.M."/>
            <person name="Bertolini M.C."/>
            <person name="Camargo L.E.A."/>
            <person name="Camarotte G."/>
            <person name="Cannavan F."/>
            <person name="Cardozo J."/>
            <person name="Chambergo F."/>
            <person name="Ciapina L.P."/>
            <person name="Cicarelli R.M.B."/>
            <person name="Coutinho L.L."/>
            <person name="Cursino-Santos J.R."/>
            <person name="El-Dorry H."/>
            <person name="Faria J.B."/>
            <person name="Ferreira A.J.S."/>
            <person name="Ferreira R.C.C."/>
            <person name="Ferro M.I.T."/>
            <person name="Formighieri E.F."/>
            <person name="Franco M.C."/>
            <person name="Greggio C.C."/>
            <person name="Gruber A."/>
            <person name="Katsuyama A.M."/>
            <person name="Kishi L.T."/>
            <person name="Leite R.P."/>
            <person name="Lemos E.G.M."/>
            <person name="Lemos M.V.F."/>
            <person name="Locali E.C."/>
            <person name="Machado M.A."/>
            <person name="Madeira A.M.B.N."/>
            <person name="Martinez-Rossi N.M."/>
            <person name="Martins E.C."/>
            <person name="Meidanis J."/>
            <person name="Menck C.F.M."/>
            <person name="Miyaki C.Y."/>
            <person name="Moon D.H."/>
            <person name="Moreira L.M."/>
            <person name="Novo M.T.M."/>
            <person name="Okura V.K."/>
            <person name="Oliveira M.C."/>
            <person name="Oliveira V.R."/>
            <person name="Pereira H.A."/>
            <person name="Rossi A."/>
            <person name="Sena J.A.D."/>
            <person name="Silva C."/>
            <person name="de Souza R.F."/>
            <person name="Spinola L.A.F."/>
            <person name="Takita M.A."/>
            <person name="Tamura R.E."/>
            <person name="Teixeira E.C."/>
            <person name="Tezza R.I.D."/>
            <person name="Trindade dos Santos M."/>
            <person name="Truffi D."/>
            <person name="Tsai S.M."/>
            <person name="White F.F."/>
            <person name="Setubal J.C."/>
            <person name="Kitajima J.P."/>
        </authorList>
    </citation>
    <scope>NUCLEOTIDE SEQUENCE [LARGE SCALE GENOMIC DNA]</scope>
    <source>
        <strain>ATCC 33913 / DSM 3586 / NCPPB 528 / LMG 568 / P 25</strain>
    </source>
</reference>
<organism>
    <name type="scientific">Xanthomonas campestris pv. campestris (strain ATCC 33913 / DSM 3586 / NCPPB 528 / LMG 568 / P 25)</name>
    <dbReference type="NCBI Taxonomy" id="190485"/>
    <lineage>
        <taxon>Bacteria</taxon>
        <taxon>Pseudomonadati</taxon>
        <taxon>Pseudomonadota</taxon>
        <taxon>Gammaproteobacteria</taxon>
        <taxon>Lysobacterales</taxon>
        <taxon>Lysobacteraceae</taxon>
        <taxon>Xanthomonas</taxon>
    </lineage>
</organism>
<evidence type="ECO:0000255" key="1">
    <source>
        <dbReference type="HAMAP-Rule" id="MF_00012"/>
    </source>
</evidence>